<proteinExistence type="inferred from homology"/>
<keyword id="KW-0021">Allosteric enzyme</keyword>
<keyword id="KW-0119">Carbohydrate metabolism</keyword>
<keyword id="KW-0378">Hydrolase</keyword>
<name>NAGB_PORG3</name>
<protein>
    <recommendedName>
        <fullName evidence="1">Glucosamine-6-phosphate deaminase</fullName>
        <ecNumber evidence="1">3.5.99.6</ecNumber>
    </recommendedName>
    <alternativeName>
        <fullName evidence="1">GlcN6P deaminase</fullName>
        <shortName evidence="1">GNPDA</shortName>
    </alternativeName>
    <alternativeName>
        <fullName evidence="1">Glucosamine-6-phosphate isomerase</fullName>
    </alternativeName>
</protein>
<dbReference type="EC" id="3.5.99.6" evidence="1"/>
<dbReference type="EMBL" id="AP009380">
    <property type="protein sequence ID" value="BAG33346.1"/>
    <property type="molecule type" value="Genomic_DNA"/>
</dbReference>
<dbReference type="RefSeq" id="WP_012457807.1">
    <property type="nucleotide sequence ID" value="NZ_CP025930.1"/>
</dbReference>
<dbReference type="SMR" id="B2RJ01"/>
<dbReference type="GeneID" id="29256044"/>
<dbReference type="KEGG" id="pgn:PGN_0827"/>
<dbReference type="eggNOG" id="COG0363">
    <property type="taxonomic scope" value="Bacteria"/>
</dbReference>
<dbReference type="HOGENOM" id="CLU_049611_0_1_10"/>
<dbReference type="OrthoDB" id="9791139at2"/>
<dbReference type="BioCyc" id="PGIN431947:G1G2V-906-MONOMER"/>
<dbReference type="UniPathway" id="UPA00629">
    <property type="reaction ID" value="UER00684"/>
</dbReference>
<dbReference type="Proteomes" id="UP000008842">
    <property type="component" value="Chromosome"/>
</dbReference>
<dbReference type="GO" id="GO:0005737">
    <property type="term" value="C:cytoplasm"/>
    <property type="evidence" value="ECO:0007669"/>
    <property type="project" value="TreeGrafter"/>
</dbReference>
<dbReference type="GO" id="GO:0004342">
    <property type="term" value="F:glucosamine-6-phosphate deaminase activity"/>
    <property type="evidence" value="ECO:0007669"/>
    <property type="project" value="UniProtKB-UniRule"/>
</dbReference>
<dbReference type="GO" id="GO:0042802">
    <property type="term" value="F:identical protein binding"/>
    <property type="evidence" value="ECO:0007669"/>
    <property type="project" value="TreeGrafter"/>
</dbReference>
<dbReference type="GO" id="GO:0005975">
    <property type="term" value="P:carbohydrate metabolic process"/>
    <property type="evidence" value="ECO:0007669"/>
    <property type="project" value="InterPro"/>
</dbReference>
<dbReference type="GO" id="GO:0006043">
    <property type="term" value="P:glucosamine catabolic process"/>
    <property type="evidence" value="ECO:0007669"/>
    <property type="project" value="TreeGrafter"/>
</dbReference>
<dbReference type="GO" id="GO:0006046">
    <property type="term" value="P:N-acetylglucosamine catabolic process"/>
    <property type="evidence" value="ECO:0007669"/>
    <property type="project" value="TreeGrafter"/>
</dbReference>
<dbReference type="GO" id="GO:0019262">
    <property type="term" value="P:N-acetylneuraminate catabolic process"/>
    <property type="evidence" value="ECO:0007669"/>
    <property type="project" value="UniProtKB-UniRule"/>
</dbReference>
<dbReference type="CDD" id="cd01399">
    <property type="entry name" value="GlcN6P_deaminase"/>
    <property type="match status" value="1"/>
</dbReference>
<dbReference type="FunFam" id="3.40.50.1360:FF:000002">
    <property type="entry name" value="Glucosamine-6-phosphate deaminase"/>
    <property type="match status" value="1"/>
</dbReference>
<dbReference type="Gene3D" id="3.40.50.1360">
    <property type="match status" value="1"/>
</dbReference>
<dbReference type="HAMAP" id="MF_01241">
    <property type="entry name" value="GlcN6P_deamin"/>
    <property type="match status" value="1"/>
</dbReference>
<dbReference type="InterPro" id="IPR006148">
    <property type="entry name" value="Glc/Gal-6P_isomerase"/>
</dbReference>
<dbReference type="InterPro" id="IPR004547">
    <property type="entry name" value="Glucosamine6P_isomerase"/>
</dbReference>
<dbReference type="InterPro" id="IPR018321">
    <property type="entry name" value="Glucosamine6P_isomerase_CS"/>
</dbReference>
<dbReference type="InterPro" id="IPR037171">
    <property type="entry name" value="NagB/RpiA_transferase-like"/>
</dbReference>
<dbReference type="NCBIfam" id="TIGR00502">
    <property type="entry name" value="nagB"/>
    <property type="match status" value="1"/>
</dbReference>
<dbReference type="PANTHER" id="PTHR11280">
    <property type="entry name" value="GLUCOSAMINE-6-PHOSPHATE ISOMERASE"/>
    <property type="match status" value="1"/>
</dbReference>
<dbReference type="PANTHER" id="PTHR11280:SF5">
    <property type="entry name" value="GLUCOSAMINE-6-PHOSPHATE ISOMERASE"/>
    <property type="match status" value="1"/>
</dbReference>
<dbReference type="Pfam" id="PF01182">
    <property type="entry name" value="Glucosamine_iso"/>
    <property type="match status" value="1"/>
</dbReference>
<dbReference type="SUPFAM" id="SSF100950">
    <property type="entry name" value="NagB/RpiA/CoA transferase-like"/>
    <property type="match status" value="1"/>
</dbReference>
<dbReference type="PROSITE" id="PS01161">
    <property type="entry name" value="GLC_GALNAC_ISOMERASE"/>
    <property type="match status" value="1"/>
</dbReference>
<feature type="chain" id="PRO_1000139782" description="Glucosamine-6-phosphate deaminase">
    <location>
        <begin position="1"/>
        <end position="263"/>
    </location>
</feature>
<feature type="active site" description="Proton acceptor; for enolization step" evidence="1">
    <location>
        <position position="72"/>
    </location>
</feature>
<feature type="active site" description="For ring-opening step" evidence="1">
    <location>
        <position position="141"/>
    </location>
</feature>
<feature type="active site" description="Proton acceptor; for ring-opening step" evidence="1">
    <location>
        <position position="143"/>
    </location>
</feature>
<feature type="active site" description="For ring-opening step" evidence="1">
    <location>
        <position position="148"/>
    </location>
</feature>
<feature type="site" description="Part of the allosteric site" evidence="1">
    <location>
        <position position="151"/>
    </location>
</feature>
<feature type="site" description="Part of the allosteric site" evidence="1">
    <location>
        <position position="158"/>
    </location>
</feature>
<feature type="site" description="Part of the allosteric site" evidence="1">
    <location>
        <position position="160"/>
    </location>
</feature>
<feature type="site" description="Part of the allosteric site" evidence="1">
    <location>
        <position position="161"/>
    </location>
</feature>
<feature type="site" description="Part of the allosteric site" evidence="1">
    <location>
        <position position="254"/>
    </location>
</feature>
<organism>
    <name type="scientific">Porphyromonas gingivalis (strain ATCC 33277 / DSM 20709 / CIP 103683 / JCM 12257 / NCTC 11834 / 2561)</name>
    <dbReference type="NCBI Taxonomy" id="431947"/>
    <lineage>
        <taxon>Bacteria</taxon>
        <taxon>Pseudomonadati</taxon>
        <taxon>Bacteroidota</taxon>
        <taxon>Bacteroidia</taxon>
        <taxon>Bacteroidales</taxon>
        <taxon>Porphyromonadaceae</taxon>
        <taxon>Porphyromonas</taxon>
    </lineage>
</organism>
<gene>
    <name evidence="1" type="primary">nagB</name>
    <name type="ordered locus">PGN_0827</name>
</gene>
<accession>B2RJ01</accession>
<evidence type="ECO:0000255" key="1">
    <source>
        <dbReference type="HAMAP-Rule" id="MF_01241"/>
    </source>
</evidence>
<sequence length="263" mass="29242">MRLIIEPDYDKLSTWAADYVIERIHKAAPTAEKPFVLGLPTGSSPIGMYRELVKACKEGCISFRHVITFNMDEYVGLATEHPESYHSFMHRHLFDHIDILPQNIHILNGNAPDLTAECDAYERAIEAAGGIDLFIGGIGPDGHIAFNEPGSSLTSRTRIKTLTTDTVLANSRFFDNDTNQVPKRALTVGVGTIMDAREVMILVNGHTKARALREAVEGAVSQMWTITALQLHRQSIIVCDEAACVELKVGTYNYFKDIERNNL</sequence>
<reference key="1">
    <citation type="journal article" date="2008" name="DNA Res.">
        <title>Determination of the genome sequence of Porphyromonas gingivalis strain ATCC 33277 and genomic comparison with strain W83 revealed extensive genome rearrangements in P. gingivalis.</title>
        <authorList>
            <person name="Naito M."/>
            <person name="Hirakawa H."/>
            <person name="Yamashita A."/>
            <person name="Ohara N."/>
            <person name="Shoji M."/>
            <person name="Yukitake H."/>
            <person name="Nakayama K."/>
            <person name="Toh H."/>
            <person name="Yoshimura F."/>
            <person name="Kuhara S."/>
            <person name="Hattori M."/>
            <person name="Hayashi T."/>
            <person name="Nakayama K."/>
        </authorList>
    </citation>
    <scope>NUCLEOTIDE SEQUENCE [LARGE SCALE GENOMIC DNA]</scope>
    <source>
        <strain>ATCC 33277 / DSM 20709 / CIP 103683 / JCM 12257 / NCTC 11834 / 2561</strain>
    </source>
</reference>
<comment type="function">
    <text evidence="1">Catalyzes the reversible isomerization-deamination of glucosamine 6-phosphate (GlcN6P) to form fructose 6-phosphate (Fru6P) and ammonium ion.</text>
</comment>
<comment type="catalytic activity">
    <reaction evidence="1">
        <text>alpha-D-glucosamine 6-phosphate + H2O = beta-D-fructose 6-phosphate + NH4(+)</text>
        <dbReference type="Rhea" id="RHEA:12172"/>
        <dbReference type="ChEBI" id="CHEBI:15377"/>
        <dbReference type="ChEBI" id="CHEBI:28938"/>
        <dbReference type="ChEBI" id="CHEBI:57634"/>
        <dbReference type="ChEBI" id="CHEBI:75989"/>
        <dbReference type="EC" id="3.5.99.6"/>
    </reaction>
</comment>
<comment type="activity regulation">
    <text evidence="1">Allosterically activated by N-acetylglucosamine 6-phosphate (GlcNAc6P).</text>
</comment>
<comment type="pathway">
    <text evidence="1">Amino-sugar metabolism; N-acetylneuraminate degradation; D-fructose 6-phosphate from N-acetylneuraminate: step 5/5.</text>
</comment>
<comment type="similarity">
    <text evidence="1">Belongs to the glucosamine/galactosamine-6-phosphate isomerase family. NagB subfamily.</text>
</comment>